<feature type="signal peptide" evidence="1">
    <location>
        <begin position="1"/>
        <end position="16"/>
    </location>
</feature>
<feature type="chain" id="PRO_0000429554" description="Aspartic and glutamic acid-rich protein" evidence="1">
    <location>
        <begin position="17"/>
        <end position="522"/>
    </location>
</feature>
<feature type="region of interest" description="Disordered" evidence="2">
    <location>
        <begin position="72"/>
        <end position="497"/>
    </location>
</feature>
<feature type="coiled-coil region" evidence="1">
    <location>
        <begin position="319"/>
        <end position="465"/>
    </location>
</feature>
<feature type="compositionally biased region" description="Basic and acidic residues" evidence="2">
    <location>
        <begin position="72"/>
        <end position="81"/>
    </location>
</feature>
<feature type="compositionally biased region" description="Basic and acidic residues" evidence="2">
    <location>
        <begin position="93"/>
        <end position="102"/>
    </location>
</feature>
<feature type="compositionally biased region" description="Acidic residues" evidence="2">
    <location>
        <begin position="109"/>
        <end position="125"/>
    </location>
</feature>
<feature type="compositionally biased region" description="Basic and acidic residues" evidence="2">
    <location>
        <begin position="142"/>
        <end position="152"/>
    </location>
</feature>
<feature type="compositionally biased region" description="Acidic residues" evidence="2">
    <location>
        <begin position="153"/>
        <end position="166"/>
    </location>
</feature>
<feature type="compositionally biased region" description="Acidic residues" evidence="2">
    <location>
        <begin position="173"/>
        <end position="200"/>
    </location>
</feature>
<feature type="compositionally biased region" description="Acidic residues" evidence="2">
    <location>
        <begin position="228"/>
        <end position="261"/>
    </location>
</feature>
<feature type="compositionally biased region" description="Acidic residues" evidence="2">
    <location>
        <begin position="267"/>
        <end position="283"/>
    </location>
</feature>
<feature type="compositionally biased region" description="Basic and acidic residues" evidence="2">
    <location>
        <begin position="284"/>
        <end position="343"/>
    </location>
</feature>
<feature type="compositionally biased region" description="Acidic residues" evidence="2">
    <location>
        <begin position="358"/>
        <end position="374"/>
    </location>
</feature>
<feature type="compositionally biased region" description="Basic and acidic residues" evidence="2">
    <location>
        <begin position="375"/>
        <end position="397"/>
    </location>
</feature>
<feature type="compositionally biased region" description="Basic and acidic residues" evidence="2">
    <location>
        <begin position="407"/>
        <end position="453"/>
    </location>
</feature>
<feature type="compositionally biased region" description="Basic and acidic residues" evidence="2">
    <location>
        <begin position="461"/>
        <end position="491"/>
    </location>
</feature>
<accession>B7W112</accession>
<reference evidence="5" key="1">
    <citation type="journal article" date="2012" name="Mol. Ecol.">
        <title>Whole transcriptome analysis of the coral Acropora millepora reveals complex responses to CO(2)-driven acidification during the initiation of calcification.</title>
        <authorList>
            <person name="Moya A."/>
            <person name="Huisman L."/>
            <person name="Ball E.E."/>
            <person name="Hayward D.C."/>
            <person name="Grasso L.C."/>
            <person name="Chua C.M."/>
            <person name="Woo H.N."/>
            <person name="Gattuso J.P."/>
            <person name="Foret S."/>
            <person name="Miller D.J."/>
        </authorList>
    </citation>
    <scope>NUCLEOTIDE SEQUENCE [MRNA]</scope>
</reference>
<reference evidence="5" key="2">
    <citation type="journal article" date="2013" name="Mol. Biol. Evol.">
        <title>The skeletal proteome of the coral Acropora millepora: the evolution of calcification by co-option and domain shuffling.</title>
        <authorList>
            <person name="Ramos-Silva P."/>
            <person name="Kaandorp J."/>
            <person name="Huisman L."/>
            <person name="Marie B."/>
            <person name="Zanella-Cleon I."/>
            <person name="Guichard N."/>
            <person name="Miller D.J."/>
            <person name="Marin F."/>
        </authorList>
    </citation>
    <scope>PROTEIN SEQUENCE OF 287-305 AND 397-426</scope>
    <scope>TISSUE SPECIFICITY</scope>
    <scope>IDENTIFICATION BY MASS SPECTROMETRY</scope>
</reference>
<protein>
    <recommendedName>
        <fullName evidence="4">Aspartic and glutamic acid-rich protein</fullName>
    </recommendedName>
</protein>
<dbReference type="EMBL" id="JR983175">
    <property type="status" value="NOT_ANNOTATED_CDS"/>
    <property type="molecule type" value="mRNA"/>
</dbReference>
<dbReference type="OrthoDB" id="10551722at2759"/>
<dbReference type="GO" id="GO:0005576">
    <property type="term" value="C:extracellular region"/>
    <property type="evidence" value="ECO:0007669"/>
    <property type="project" value="UniProtKB-SubCell"/>
</dbReference>
<organism>
    <name type="scientific">Acropora millepora</name>
    <name type="common">Staghorn coral</name>
    <name type="synonym">Heteropora millepora</name>
    <dbReference type="NCBI Taxonomy" id="45264"/>
    <lineage>
        <taxon>Eukaryota</taxon>
        <taxon>Metazoa</taxon>
        <taxon>Cnidaria</taxon>
        <taxon>Anthozoa</taxon>
        <taxon>Hexacorallia</taxon>
        <taxon>Scleractinia</taxon>
        <taxon>Astrocoeniina</taxon>
        <taxon>Acroporidae</taxon>
        <taxon>Acropora</taxon>
    </lineage>
</organism>
<sequence length="522" mass="60167">MKVFVYLLVTFSLTNASPLRNRFNEDHDEFSKDDMARESFDTEEMYNAFLNRRDSSESQLEDHLLSHAKPLYDDFFPKDTSPDDDEDSYWLESRNDDGYDLAKRKRGYDDEEAYDDFDEVDDRADDEGARDVDESDFEEDDKLPAEEESKNDMDEETFEDEPEEDKEEAREEFAEDERADEREDDDADFDFNDEEDEDEVDNKAESDIFTPEDFAGVSDEAMDNFRDDNEEEYADESDDEAEEDSEETADDFEDDPEDESDETFRDEVEDESEENYQDDTEEGSEIKQNDETEEQPEKKFDADKEHEDAPEPLKEKLSDESKARAEDESDKSEDAAKEIKEPEDAVEDFEDGAKVSEDEAELLDDEAELSDDEAELSKDEAEQSSDEAEKSEDKAEKSEDEAELSEDEAKQSEDEAEKAEDAAGKESNDEGKKREDEAVKSKGIARDESEFAKAKKSNLALKRDENRPLAKGLRESAAHLRDFPSEKKSKDAAQGNIENELDYFKRNAFADSKDAEPYEFDK</sequence>
<keyword id="KW-0175">Coiled coil</keyword>
<keyword id="KW-0903">Direct protein sequencing</keyword>
<keyword id="KW-0964">Secreted</keyword>
<keyword id="KW-0732">Signal</keyword>
<name>DQRP_ACRMI</name>
<comment type="subcellular location">
    <subcellularLocation>
        <location evidence="6">Secreted</location>
    </subcellularLocation>
</comment>
<comment type="tissue specificity">
    <text evidence="3">Component of the acid-soluble organic matrix of the aragonitic skeleton (at protein level).</text>
</comment>
<evidence type="ECO:0000255" key="1"/>
<evidence type="ECO:0000256" key="2">
    <source>
        <dbReference type="SAM" id="MobiDB-lite"/>
    </source>
</evidence>
<evidence type="ECO:0000269" key="3">
    <source>
    </source>
</evidence>
<evidence type="ECO:0000303" key="4">
    <source>
    </source>
</evidence>
<evidence type="ECO:0000305" key="5"/>
<evidence type="ECO:0000305" key="6">
    <source>
    </source>
</evidence>
<proteinExistence type="evidence at protein level"/>